<comment type="function">
    <text evidence="1">One of the primary rRNA binding proteins. Required for association of the 30S and 50S subunits to form the 70S ribosome, for tRNA binding and peptide bond formation. It has been suggested to have peptidyltransferase activity; this is somewhat controversial. Makes several contacts with the 16S rRNA in the 70S ribosome.</text>
</comment>
<comment type="subunit">
    <text evidence="1">Part of the 50S ribosomal subunit. Forms a bridge to the 30S subunit in the 70S ribosome.</text>
</comment>
<comment type="similarity">
    <text evidence="1">Belongs to the universal ribosomal protein uL2 family.</text>
</comment>
<protein>
    <recommendedName>
        <fullName evidence="1">Large ribosomal subunit protein uL2</fullName>
    </recommendedName>
    <alternativeName>
        <fullName evidence="3">50S ribosomal protein L2</fullName>
    </alternativeName>
</protein>
<dbReference type="EMBL" id="CP001150">
    <property type="protein sequence ID" value="ACL99876.1"/>
    <property type="molecule type" value="Genomic_DNA"/>
</dbReference>
<dbReference type="RefSeq" id="WP_002722495.1">
    <property type="nucleotide sequence ID" value="NC_011963.1"/>
</dbReference>
<dbReference type="SMR" id="B9KL94"/>
<dbReference type="GeneID" id="67445503"/>
<dbReference type="KEGG" id="rsk:RSKD131_0017"/>
<dbReference type="HOGENOM" id="CLU_036235_2_1_5"/>
<dbReference type="GO" id="GO:0015934">
    <property type="term" value="C:large ribosomal subunit"/>
    <property type="evidence" value="ECO:0007669"/>
    <property type="project" value="InterPro"/>
</dbReference>
<dbReference type="GO" id="GO:0019843">
    <property type="term" value="F:rRNA binding"/>
    <property type="evidence" value="ECO:0007669"/>
    <property type="project" value="UniProtKB-UniRule"/>
</dbReference>
<dbReference type="GO" id="GO:0003735">
    <property type="term" value="F:structural constituent of ribosome"/>
    <property type="evidence" value="ECO:0007669"/>
    <property type="project" value="InterPro"/>
</dbReference>
<dbReference type="GO" id="GO:0016740">
    <property type="term" value="F:transferase activity"/>
    <property type="evidence" value="ECO:0007669"/>
    <property type="project" value="InterPro"/>
</dbReference>
<dbReference type="GO" id="GO:0002181">
    <property type="term" value="P:cytoplasmic translation"/>
    <property type="evidence" value="ECO:0007669"/>
    <property type="project" value="TreeGrafter"/>
</dbReference>
<dbReference type="FunFam" id="2.30.30.30:FF:000001">
    <property type="entry name" value="50S ribosomal protein L2"/>
    <property type="match status" value="1"/>
</dbReference>
<dbReference type="FunFam" id="2.40.50.140:FF:000003">
    <property type="entry name" value="50S ribosomal protein L2"/>
    <property type="match status" value="1"/>
</dbReference>
<dbReference type="FunFam" id="4.10.950.10:FF:000001">
    <property type="entry name" value="50S ribosomal protein L2"/>
    <property type="match status" value="1"/>
</dbReference>
<dbReference type="Gene3D" id="2.30.30.30">
    <property type="match status" value="1"/>
</dbReference>
<dbReference type="Gene3D" id="2.40.50.140">
    <property type="entry name" value="Nucleic acid-binding proteins"/>
    <property type="match status" value="1"/>
</dbReference>
<dbReference type="Gene3D" id="4.10.950.10">
    <property type="entry name" value="Ribosomal protein L2, domain 3"/>
    <property type="match status" value="1"/>
</dbReference>
<dbReference type="HAMAP" id="MF_01320_B">
    <property type="entry name" value="Ribosomal_uL2_B"/>
    <property type="match status" value="1"/>
</dbReference>
<dbReference type="InterPro" id="IPR012340">
    <property type="entry name" value="NA-bd_OB-fold"/>
</dbReference>
<dbReference type="InterPro" id="IPR014722">
    <property type="entry name" value="Rib_uL2_dom2"/>
</dbReference>
<dbReference type="InterPro" id="IPR002171">
    <property type="entry name" value="Ribosomal_uL2"/>
</dbReference>
<dbReference type="InterPro" id="IPR005880">
    <property type="entry name" value="Ribosomal_uL2_bac/org-type"/>
</dbReference>
<dbReference type="InterPro" id="IPR022669">
    <property type="entry name" value="Ribosomal_uL2_C"/>
</dbReference>
<dbReference type="InterPro" id="IPR022671">
    <property type="entry name" value="Ribosomal_uL2_CS"/>
</dbReference>
<dbReference type="InterPro" id="IPR014726">
    <property type="entry name" value="Ribosomal_uL2_dom3"/>
</dbReference>
<dbReference type="InterPro" id="IPR022666">
    <property type="entry name" value="Ribosomal_uL2_RNA-bd_dom"/>
</dbReference>
<dbReference type="InterPro" id="IPR008991">
    <property type="entry name" value="Translation_prot_SH3-like_sf"/>
</dbReference>
<dbReference type="NCBIfam" id="TIGR01171">
    <property type="entry name" value="rplB_bact"/>
    <property type="match status" value="1"/>
</dbReference>
<dbReference type="PANTHER" id="PTHR13691:SF5">
    <property type="entry name" value="LARGE RIBOSOMAL SUBUNIT PROTEIN UL2M"/>
    <property type="match status" value="1"/>
</dbReference>
<dbReference type="PANTHER" id="PTHR13691">
    <property type="entry name" value="RIBOSOMAL PROTEIN L2"/>
    <property type="match status" value="1"/>
</dbReference>
<dbReference type="Pfam" id="PF00181">
    <property type="entry name" value="Ribosomal_L2"/>
    <property type="match status" value="1"/>
</dbReference>
<dbReference type="Pfam" id="PF03947">
    <property type="entry name" value="Ribosomal_L2_C"/>
    <property type="match status" value="1"/>
</dbReference>
<dbReference type="PIRSF" id="PIRSF002158">
    <property type="entry name" value="Ribosomal_L2"/>
    <property type="match status" value="1"/>
</dbReference>
<dbReference type="SMART" id="SM01383">
    <property type="entry name" value="Ribosomal_L2"/>
    <property type="match status" value="1"/>
</dbReference>
<dbReference type="SMART" id="SM01382">
    <property type="entry name" value="Ribosomal_L2_C"/>
    <property type="match status" value="1"/>
</dbReference>
<dbReference type="SUPFAM" id="SSF50249">
    <property type="entry name" value="Nucleic acid-binding proteins"/>
    <property type="match status" value="1"/>
</dbReference>
<dbReference type="SUPFAM" id="SSF50104">
    <property type="entry name" value="Translation proteins SH3-like domain"/>
    <property type="match status" value="1"/>
</dbReference>
<dbReference type="PROSITE" id="PS00467">
    <property type="entry name" value="RIBOSOMAL_L2"/>
    <property type="match status" value="1"/>
</dbReference>
<reference key="1">
    <citation type="journal article" date="2009" name="J. Bacteriol.">
        <title>Complete genome sequence of Rhodobacter sphaeroides KD131.</title>
        <authorList>
            <person name="Lim S.-K."/>
            <person name="Kim S.J."/>
            <person name="Cha S.H."/>
            <person name="Oh Y.-K."/>
            <person name="Rhee H.-J."/>
            <person name="Kim M.-S."/>
            <person name="Lee J.K."/>
        </authorList>
    </citation>
    <scope>NUCLEOTIDE SEQUENCE [LARGE SCALE GENOMIC DNA]</scope>
    <source>
        <strain>KD131 / KCTC 12085</strain>
    </source>
</reference>
<keyword id="KW-0687">Ribonucleoprotein</keyword>
<keyword id="KW-0689">Ribosomal protein</keyword>
<keyword id="KW-0694">RNA-binding</keyword>
<keyword id="KW-0699">rRNA-binding</keyword>
<sequence>MALKSYKPTTPGQRGLVLIDRSELWKGRPVKTLVEGLIKTGGRNNTGRVTMWHKGGGAKRLYRIVDFKRRKFDVPAVVERIEYDPNRTAFIALVRYEDGELAYILAPQRLAVGDSVVAGVKTDVKPGNAMPFSGMPIGTIVHNVELKPGKGGQLARAAGTYAQFVGRDGGYAQIRLSSGELRMVRQECMATVGAVSNPDNSNQNFGKAGRMRHKGVRPTVRGVAMNPIDHPHGGGEGRTSGGRHPVTPWGKGTKGNRTRKSKASDKLIVRSRHAKKKGR</sequence>
<feature type="chain" id="PRO_1000165766" description="Large ribosomal subunit protein uL2">
    <location>
        <begin position="1"/>
        <end position="279"/>
    </location>
</feature>
<feature type="region of interest" description="Disordered" evidence="2">
    <location>
        <begin position="224"/>
        <end position="279"/>
    </location>
</feature>
<feature type="compositionally biased region" description="Basic residues" evidence="2">
    <location>
        <begin position="269"/>
        <end position="279"/>
    </location>
</feature>
<name>RL2_CERSK</name>
<proteinExistence type="inferred from homology"/>
<accession>B9KL94</accession>
<organism>
    <name type="scientific">Cereibacter sphaeroides (strain KD131 / KCTC 12085)</name>
    <name type="common">Rhodobacter sphaeroides</name>
    <dbReference type="NCBI Taxonomy" id="557760"/>
    <lineage>
        <taxon>Bacteria</taxon>
        <taxon>Pseudomonadati</taxon>
        <taxon>Pseudomonadota</taxon>
        <taxon>Alphaproteobacteria</taxon>
        <taxon>Rhodobacterales</taxon>
        <taxon>Paracoccaceae</taxon>
        <taxon>Cereibacter</taxon>
    </lineage>
</organism>
<evidence type="ECO:0000255" key="1">
    <source>
        <dbReference type="HAMAP-Rule" id="MF_01320"/>
    </source>
</evidence>
<evidence type="ECO:0000256" key="2">
    <source>
        <dbReference type="SAM" id="MobiDB-lite"/>
    </source>
</evidence>
<evidence type="ECO:0000305" key="3"/>
<gene>
    <name evidence="1" type="primary">rplB</name>
    <name type="ordered locus">RSKD131_0017</name>
</gene>